<organism>
    <name type="scientific">Mus musculus</name>
    <name type="common">Mouse</name>
    <dbReference type="NCBI Taxonomy" id="10090"/>
    <lineage>
        <taxon>Eukaryota</taxon>
        <taxon>Metazoa</taxon>
        <taxon>Chordata</taxon>
        <taxon>Craniata</taxon>
        <taxon>Vertebrata</taxon>
        <taxon>Euteleostomi</taxon>
        <taxon>Mammalia</taxon>
        <taxon>Eutheria</taxon>
        <taxon>Euarchontoglires</taxon>
        <taxon>Glires</taxon>
        <taxon>Rodentia</taxon>
        <taxon>Myomorpha</taxon>
        <taxon>Muroidea</taxon>
        <taxon>Muridae</taxon>
        <taxon>Murinae</taxon>
        <taxon>Mus</taxon>
        <taxon>Mus</taxon>
    </lineage>
</organism>
<accession>Q8K0H7</accession>
<accession>Q8K252</accession>
<accession>Q8R1I0</accession>
<proteinExistence type="evidence at protein level"/>
<reference key="1">
    <citation type="journal article" date="2005" name="Science">
        <title>The transcriptional landscape of the mammalian genome.</title>
        <authorList>
            <person name="Carninci P."/>
            <person name="Kasukawa T."/>
            <person name="Katayama S."/>
            <person name="Gough J."/>
            <person name="Frith M.C."/>
            <person name="Maeda N."/>
            <person name="Oyama R."/>
            <person name="Ravasi T."/>
            <person name="Lenhard B."/>
            <person name="Wells C."/>
            <person name="Kodzius R."/>
            <person name="Shimokawa K."/>
            <person name="Bajic V.B."/>
            <person name="Brenner S.E."/>
            <person name="Batalov S."/>
            <person name="Forrest A.R."/>
            <person name="Zavolan M."/>
            <person name="Davis M.J."/>
            <person name="Wilming L.G."/>
            <person name="Aidinis V."/>
            <person name="Allen J.E."/>
            <person name="Ambesi-Impiombato A."/>
            <person name="Apweiler R."/>
            <person name="Aturaliya R.N."/>
            <person name="Bailey T.L."/>
            <person name="Bansal M."/>
            <person name="Baxter L."/>
            <person name="Beisel K.W."/>
            <person name="Bersano T."/>
            <person name="Bono H."/>
            <person name="Chalk A.M."/>
            <person name="Chiu K.P."/>
            <person name="Choudhary V."/>
            <person name="Christoffels A."/>
            <person name="Clutterbuck D.R."/>
            <person name="Crowe M.L."/>
            <person name="Dalla E."/>
            <person name="Dalrymple B.P."/>
            <person name="de Bono B."/>
            <person name="Della Gatta G."/>
            <person name="di Bernardo D."/>
            <person name="Down T."/>
            <person name="Engstrom P."/>
            <person name="Fagiolini M."/>
            <person name="Faulkner G."/>
            <person name="Fletcher C.F."/>
            <person name="Fukushima T."/>
            <person name="Furuno M."/>
            <person name="Futaki S."/>
            <person name="Gariboldi M."/>
            <person name="Georgii-Hemming P."/>
            <person name="Gingeras T.R."/>
            <person name="Gojobori T."/>
            <person name="Green R.E."/>
            <person name="Gustincich S."/>
            <person name="Harbers M."/>
            <person name="Hayashi Y."/>
            <person name="Hensch T.K."/>
            <person name="Hirokawa N."/>
            <person name="Hill D."/>
            <person name="Huminiecki L."/>
            <person name="Iacono M."/>
            <person name="Ikeo K."/>
            <person name="Iwama A."/>
            <person name="Ishikawa T."/>
            <person name="Jakt M."/>
            <person name="Kanapin A."/>
            <person name="Katoh M."/>
            <person name="Kawasawa Y."/>
            <person name="Kelso J."/>
            <person name="Kitamura H."/>
            <person name="Kitano H."/>
            <person name="Kollias G."/>
            <person name="Krishnan S.P."/>
            <person name="Kruger A."/>
            <person name="Kummerfeld S.K."/>
            <person name="Kurochkin I.V."/>
            <person name="Lareau L.F."/>
            <person name="Lazarevic D."/>
            <person name="Lipovich L."/>
            <person name="Liu J."/>
            <person name="Liuni S."/>
            <person name="McWilliam S."/>
            <person name="Madan Babu M."/>
            <person name="Madera M."/>
            <person name="Marchionni L."/>
            <person name="Matsuda H."/>
            <person name="Matsuzawa S."/>
            <person name="Miki H."/>
            <person name="Mignone F."/>
            <person name="Miyake S."/>
            <person name="Morris K."/>
            <person name="Mottagui-Tabar S."/>
            <person name="Mulder N."/>
            <person name="Nakano N."/>
            <person name="Nakauchi H."/>
            <person name="Ng P."/>
            <person name="Nilsson R."/>
            <person name="Nishiguchi S."/>
            <person name="Nishikawa S."/>
            <person name="Nori F."/>
            <person name="Ohara O."/>
            <person name="Okazaki Y."/>
            <person name="Orlando V."/>
            <person name="Pang K.C."/>
            <person name="Pavan W.J."/>
            <person name="Pavesi G."/>
            <person name="Pesole G."/>
            <person name="Petrovsky N."/>
            <person name="Piazza S."/>
            <person name="Reed J."/>
            <person name="Reid J.F."/>
            <person name="Ring B.Z."/>
            <person name="Ringwald M."/>
            <person name="Rost B."/>
            <person name="Ruan Y."/>
            <person name="Salzberg S.L."/>
            <person name="Sandelin A."/>
            <person name="Schneider C."/>
            <person name="Schoenbach C."/>
            <person name="Sekiguchi K."/>
            <person name="Semple C.A."/>
            <person name="Seno S."/>
            <person name="Sessa L."/>
            <person name="Sheng Y."/>
            <person name="Shibata Y."/>
            <person name="Shimada H."/>
            <person name="Shimada K."/>
            <person name="Silva D."/>
            <person name="Sinclair B."/>
            <person name="Sperling S."/>
            <person name="Stupka E."/>
            <person name="Sugiura K."/>
            <person name="Sultana R."/>
            <person name="Takenaka Y."/>
            <person name="Taki K."/>
            <person name="Tammoja K."/>
            <person name="Tan S.L."/>
            <person name="Tang S."/>
            <person name="Taylor M.S."/>
            <person name="Tegner J."/>
            <person name="Teichmann S.A."/>
            <person name="Ueda H.R."/>
            <person name="van Nimwegen E."/>
            <person name="Verardo R."/>
            <person name="Wei C.L."/>
            <person name="Yagi K."/>
            <person name="Yamanishi H."/>
            <person name="Zabarovsky E."/>
            <person name="Zhu S."/>
            <person name="Zimmer A."/>
            <person name="Hide W."/>
            <person name="Bult C."/>
            <person name="Grimmond S.M."/>
            <person name="Teasdale R.D."/>
            <person name="Liu E.T."/>
            <person name="Brusic V."/>
            <person name="Quackenbush J."/>
            <person name="Wahlestedt C."/>
            <person name="Mattick J.S."/>
            <person name="Hume D.A."/>
            <person name="Kai C."/>
            <person name="Sasaki D."/>
            <person name="Tomaru Y."/>
            <person name="Fukuda S."/>
            <person name="Kanamori-Katayama M."/>
            <person name="Suzuki M."/>
            <person name="Aoki J."/>
            <person name="Arakawa T."/>
            <person name="Iida J."/>
            <person name="Imamura K."/>
            <person name="Itoh M."/>
            <person name="Kato T."/>
            <person name="Kawaji H."/>
            <person name="Kawagashira N."/>
            <person name="Kawashima T."/>
            <person name="Kojima M."/>
            <person name="Kondo S."/>
            <person name="Konno H."/>
            <person name="Nakano K."/>
            <person name="Ninomiya N."/>
            <person name="Nishio T."/>
            <person name="Okada M."/>
            <person name="Plessy C."/>
            <person name="Shibata K."/>
            <person name="Shiraki T."/>
            <person name="Suzuki S."/>
            <person name="Tagami M."/>
            <person name="Waki K."/>
            <person name="Watahiki A."/>
            <person name="Okamura-Oho Y."/>
            <person name="Suzuki H."/>
            <person name="Kawai J."/>
            <person name="Hayashizaki Y."/>
        </authorList>
    </citation>
    <scope>NUCLEOTIDE SEQUENCE [LARGE SCALE MRNA]</scope>
    <source>
        <strain>C57BL/6J</strain>
        <tissue>Urinary bladder</tissue>
    </source>
</reference>
<reference key="2">
    <citation type="journal article" date="2004" name="Genome Res.">
        <title>The status, quality, and expansion of the NIH full-length cDNA project: the Mammalian Gene Collection (MGC).</title>
        <authorList>
            <consortium name="The MGC Project Team"/>
        </authorList>
    </citation>
    <scope>NUCLEOTIDE SEQUENCE [LARGE SCALE MRNA]</scope>
    <source>
        <tissue>Colon</tissue>
        <tissue>Liver</tissue>
        <tissue>Mammary tumor</tissue>
    </source>
</reference>
<reference key="3">
    <citation type="journal article" date="2004" name="Biol. Reprod.">
        <title>DNA microarray analysis of region-specific gene expression in the mouse epididymis.</title>
        <authorList>
            <person name="Hsia N."/>
            <person name="Cornwall G.A."/>
        </authorList>
    </citation>
    <scope>TISSUE SPECIFICITY</scope>
</reference>
<reference key="4">
    <citation type="journal article" date="2014" name="Biochem. J.">
        <title>Proton-associated sucrose transport of mammalian solute carrier family 45: an analysis in Saccharomyces cerevisiae.</title>
        <authorList>
            <person name="Bartoelke R."/>
            <person name="Heinisch J.J."/>
            <person name="Wieczorek H."/>
            <person name="Vitavska O."/>
        </authorList>
    </citation>
    <scope>FUNCTION</scope>
    <scope>TRANSPORTER ACTIVITY</scope>
    <scope>SUBCELLULAR LOCATION</scope>
    <scope>BIOPHYSICOCHEMICAL PROPERTIES</scope>
    <scope>TISSUE SPECIFICITY</scope>
</reference>
<feature type="chain" id="PRO_0000122521" description="Solute carrier family 45 member 3">
    <location>
        <begin position="1"/>
        <end position="553"/>
    </location>
</feature>
<feature type="transmembrane region" description="Helical; Name=1" evidence="1">
    <location>
        <begin position="19"/>
        <end position="39"/>
    </location>
</feature>
<feature type="transmembrane region" description="Helical; Name=2" evidence="1">
    <location>
        <begin position="52"/>
        <end position="72"/>
    </location>
</feature>
<feature type="transmembrane region" description="Helical; Name=3" evidence="1">
    <location>
        <begin position="88"/>
        <end position="108"/>
    </location>
</feature>
<feature type="transmembrane region" description="Helical; Name=4" evidence="1">
    <location>
        <begin position="120"/>
        <end position="140"/>
    </location>
</feature>
<feature type="transmembrane region" description="Helical; Name=5" evidence="1">
    <location>
        <begin position="161"/>
        <end position="181"/>
    </location>
</feature>
<feature type="transmembrane region" description="Helical; Name=6" evidence="1">
    <location>
        <begin position="198"/>
        <end position="218"/>
    </location>
</feature>
<feature type="transmembrane region" description="Helical; Name=7" evidence="1">
    <location>
        <begin position="275"/>
        <end position="295"/>
    </location>
</feature>
<feature type="transmembrane region" description="Helical; Name=8" evidence="1">
    <location>
        <begin position="323"/>
        <end position="343"/>
    </location>
</feature>
<feature type="transmembrane region" description="Helical; Name=9" evidence="1">
    <location>
        <begin position="353"/>
        <end position="373"/>
    </location>
</feature>
<feature type="transmembrane region" description="Helical; Name=10" evidence="1">
    <location>
        <begin position="382"/>
        <end position="402"/>
    </location>
</feature>
<feature type="transmembrane region" description="Helical; Name=11" evidence="1">
    <location>
        <begin position="522"/>
        <end position="542"/>
    </location>
</feature>
<evidence type="ECO:0000255" key="1"/>
<evidence type="ECO:0000269" key="2">
    <source>
    </source>
</evidence>
<evidence type="ECO:0000269" key="3">
    <source>
    </source>
</evidence>
<evidence type="ECO:0000305" key="4"/>
<dbReference type="EMBL" id="AK035428">
    <property type="protein sequence ID" value="BAC29063.1"/>
    <property type="molecule type" value="mRNA"/>
</dbReference>
<dbReference type="EMBL" id="BC024519">
    <property type="protein sequence ID" value="AAH24519.1"/>
    <property type="molecule type" value="mRNA"/>
</dbReference>
<dbReference type="EMBL" id="BC031381">
    <property type="protein sequence ID" value="AAH31381.1"/>
    <property type="molecule type" value="mRNA"/>
</dbReference>
<dbReference type="EMBL" id="BC034084">
    <property type="protein sequence ID" value="AAH34084.1"/>
    <property type="molecule type" value="mRNA"/>
</dbReference>
<dbReference type="CCDS" id="CCDS15278.1"/>
<dbReference type="RefSeq" id="NP_001171099.1">
    <property type="nucleotide sequence ID" value="NM_001177628.2"/>
</dbReference>
<dbReference type="RefSeq" id="NP_666089.1">
    <property type="nucleotide sequence ID" value="NM_145977.2"/>
</dbReference>
<dbReference type="RefSeq" id="XP_006529404.1">
    <property type="nucleotide sequence ID" value="XM_006529341.3"/>
</dbReference>
<dbReference type="RefSeq" id="XP_006529405.1">
    <property type="nucleotide sequence ID" value="XM_006529342.3"/>
</dbReference>
<dbReference type="SMR" id="Q8K0H7"/>
<dbReference type="FunCoup" id="Q8K0H7">
    <property type="interactions" value="38"/>
</dbReference>
<dbReference type="STRING" id="10090.ENSMUSP00000027695"/>
<dbReference type="PhosphoSitePlus" id="Q8K0H7"/>
<dbReference type="SwissPalm" id="Q8K0H7"/>
<dbReference type="PaxDb" id="10090-ENSMUSP00000027695"/>
<dbReference type="ProteomicsDB" id="260906"/>
<dbReference type="Antibodypedia" id="20683">
    <property type="antibodies" value="266 antibodies from 31 providers"/>
</dbReference>
<dbReference type="DNASU" id="212980"/>
<dbReference type="Ensembl" id="ENSMUST00000027695.8">
    <property type="protein sequence ID" value="ENSMUSP00000027695.7"/>
    <property type="gene ID" value="ENSMUSG00000026435.16"/>
</dbReference>
<dbReference type="Ensembl" id="ENSMUST00000177943.8">
    <property type="protein sequence ID" value="ENSMUSP00000136190.2"/>
    <property type="gene ID" value="ENSMUSG00000026435.16"/>
</dbReference>
<dbReference type="GeneID" id="212980"/>
<dbReference type="KEGG" id="mmu:212980"/>
<dbReference type="UCSC" id="uc007cnz.2">
    <property type="organism name" value="mouse"/>
</dbReference>
<dbReference type="AGR" id="MGI:1922082"/>
<dbReference type="CTD" id="85414"/>
<dbReference type="MGI" id="MGI:1922082">
    <property type="gene designation" value="Slc45a3"/>
</dbReference>
<dbReference type="VEuPathDB" id="HostDB:ENSMUSG00000026435"/>
<dbReference type="eggNOG" id="KOG0637">
    <property type="taxonomic scope" value="Eukaryota"/>
</dbReference>
<dbReference type="GeneTree" id="ENSGT00950000182914"/>
<dbReference type="HOGENOM" id="CLU_015081_2_2_1"/>
<dbReference type="InParanoid" id="Q8K0H7"/>
<dbReference type="OMA" id="FQWYALF"/>
<dbReference type="OrthoDB" id="28755at2759"/>
<dbReference type="PhylomeDB" id="Q8K0H7"/>
<dbReference type="TreeFam" id="TF325412"/>
<dbReference type="Reactome" id="R-MMU-189200">
    <property type="pathway name" value="Cellular hexose transport"/>
</dbReference>
<dbReference type="BioGRID-ORCS" id="212980">
    <property type="hits" value="1 hit in 79 CRISPR screens"/>
</dbReference>
<dbReference type="PRO" id="PR:Q8K0H7"/>
<dbReference type="Proteomes" id="UP000000589">
    <property type="component" value="Chromosome 1"/>
</dbReference>
<dbReference type="RNAct" id="Q8K0H7">
    <property type="molecule type" value="protein"/>
</dbReference>
<dbReference type="Bgee" id="ENSMUSG00000026435">
    <property type="expression patterns" value="Expressed in prostate gland ventral lobe and 182 other cell types or tissues"/>
</dbReference>
<dbReference type="ExpressionAtlas" id="Q8K0H7">
    <property type="expression patterns" value="baseline and differential"/>
</dbReference>
<dbReference type="GO" id="GO:0016020">
    <property type="term" value="C:membrane"/>
    <property type="evidence" value="ECO:0007669"/>
    <property type="project" value="UniProtKB-SubCell"/>
</dbReference>
<dbReference type="GO" id="GO:0008506">
    <property type="term" value="F:sucrose:proton symporter activity"/>
    <property type="evidence" value="ECO:0000314"/>
    <property type="project" value="MGI"/>
</dbReference>
<dbReference type="GO" id="GO:0045723">
    <property type="term" value="P:positive regulation of fatty acid biosynthetic process"/>
    <property type="evidence" value="ECO:0000315"/>
    <property type="project" value="ParkinsonsUK-UCL"/>
</dbReference>
<dbReference type="GO" id="GO:0010907">
    <property type="term" value="P:positive regulation of glucose metabolic process"/>
    <property type="evidence" value="ECO:0000315"/>
    <property type="project" value="ParkinsonsUK-UCL"/>
</dbReference>
<dbReference type="GO" id="GO:0048713">
    <property type="term" value="P:regulation of oligodendrocyte differentiation"/>
    <property type="evidence" value="ECO:0000315"/>
    <property type="project" value="ParkinsonsUK-UCL"/>
</dbReference>
<dbReference type="GO" id="GO:0015770">
    <property type="term" value="P:sucrose transport"/>
    <property type="evidence" value="ECO:0000314"/>
    <property type="project" value="MGI"/>
</dbReference>
<dbReference type="CDD" id="cd17313">
    <property type="entry name" value="MFS_SLC45_SUC"/>
    <property type="match status" value="1"/>
</dbReference>
<dbReference type="FunFam" id="1.20.1250.20:FF:000230">
    <property type="entry name" value="Solute carrier family 45 member 3"/>
    <property type="match status" value="1"/>
</dbReference>
<dbReference type="FunFam" id="1.20.1250.20:FF:000393">
    <property type="entry name" value="solute carrier family 45 member 3"/>
    <property type="match status" value="1"/>
</dbReference>
<dbReference type="Gene3D" id="1.20.1250.20">
    <property type="entry name" value="MFS general substrate transporter like domains"/>
    <property type="match status" value="2"/>
</dbReference>
<dbReference type="InterPro" id="IPR011701">
    <property type="entry name" value="MFS"/>
</dbReference>
<dbReference type="InterPro" id="IPR036259">
    <property type="entry name" value="MFS_trans_sf"/>
</dbReference>
<dbReference type="PANTHER" id="PTHR19432:SF37">
    <property type="entry name" value="SOLUTE CARRIER FAMILY 45 MEMBER 3"/>
    <property type="match status" value="1"/>
</dbReference>
<dbReference type="PANTHER" id="PTHR19432">
    <property type="entry name" value="SUGAR TRANSPORTER"/>
    <property type="match status" value="1"/>
</dbReference>
<dbReference type="Pfam" id="PF07690">
    <property type="entry name" value="MFS_1"/>
    <property type="match status" value="1"/>
</dbReference>
<dbReference type="SUPFAM" id="SSF103473">
    <property type="entry name" value="MFS general substrate transporter"/>
    <property type="match status" value="1"/>
</dbReference>
<name>S45A3_MOUSE</name>
<comment type="function">
    <text evidence="3">Proton-associated sucrose transporter. May be able to transport also glucose and fructose.</text>
</comment>
<comment type="catalytic activity">
    <reaction evidence="3">
        <text>sucrose(out) + H(+)(out) = sucrose(in) + H(+)(in)</text>
        <dbReference type="Rhea" id="RHEA:72187"/>
        <dbReference type="ChEBI" id="CHEBI:15378"/>
        <dbReference type="ChEBI" id="CHEBI:17992"/>
    </reaction>
</comment>
<comment type="biophysicochemical properties">
    <kinetics>
        <KM evidence="3">4.4 mM for sucrose</KM>
    </kinetics>
    <phDependence>
        <text evidence="3">Optimum pH is 6.5.</text>
    </phDependence>
</comment>
<comment type="subcellular location">
    <subcellularLocation>
        <location evidence="4">Membrane</location>
        <topology evidence="4">Multi-pass membrane protein</topology>
    </subcellularLocation>
</comment>
<comment type="tissue specificity">
    <text evidence="2 3">Expressed in the epididymis (PubMed:14561649). Primarily expressed in the prostate, but also in other tissues (PubMed:25164149).</text>
</comment>
<comment type="similarity">
    <text evidence="4">Belongs to the glycoside-pentoside-hexuronide (GPH) cation symporter transporter (TC 2.A.2) family.</text>
</comment>
<protein>
    <recommendedName>
        <fullName>Solute carrier family 45 member 3</fullName>
    </recommendedName>
    <alternativeName>
        <fullName>Prostate cancer-associated protein 6</fullName>
    </alternativeName>
    <alternativeName>
        <fullName>Prostein</fullName>
    </alternativeName>
</protein>
<sequence length="553" mass="59742">MIQRLWASRLLRHRKAQLLLVNLLTFGLEVCLAAGITYVPPLLLEVGVEEKFMTMVLGIGPVLGLVSVPLLGSASDQWRGRYGRRRPFIWALSLGVLLSLFLIPRAGWLAGLLYPDTRPLELALLILGVGLLDFCGQVCFTPLEALLSDLFRDPDHCRQAFSVYAFMISLGGCLGYLLPAIDWDTSVLAPYLGTQEECLFGLLTLIFLICMAATLFVTEEAVLGPPEPAEGLLVSAVSRRCCPCHVGLAFRNLGTLFPRLQQLCCRMPRTLRRLFVAELCSWMALMTFTLFYTDFVGEGLYQGVPRAEPGTEARRHYDEGIRMGSLGLFLQCAISLVFSLVMDRLVQKFGTRSVYLASVMTFPVAAAATCLSHSVVVVTASAALTGFTFSALQILPYTLASLYHREKQVFLPKYRGDAGGSSGEDSQTTSFLPGPKPGALFPNGHVGSGSSGILAPPPALCGASACDVSMRVVVGEPPEARVVTGRGICLDLAILDSAFLLSQVAPSLFMGSIVQLSHSVTAYMVSAAGLGLVAIYFATQVVFDKNDLAKYSV</sequence>
<keyword id="KW-0472">Membrane</keyword>
<keyword id="KW-1185">Reference proteome</keyword>
<keyword id="KW-0769">Symport</keyword>
<keyword id="KW-0812">Transmembrane</keyword>
<keyword id="KW-1133">Transmembrane helix</keyword>
<keyword id="KW-0813">Transport</keyword>
<gene>
    <name type="primary">Slc45a3</name>
    <name type="synonym">Pcanap6</name>
    <name type="synonym">Prst</name>
</gene>